<accession>Q8YXS9</accession>
<gene>
    <name evidence="1" type="primary">uvrB</name>
    <name type="ordered locus">all1132</name>
</gene>
<name>UVRB_NOSS1</name>
<comment type="function">
    <text evidence="1">The UvrABC repair system catalyzes the recognition and processing of DNA lesions. A damage recognition complex composed of 2 UvrA and 2 UvrB subunits scans DNA for abnormalities. Upon binding of the UvrA(2)B(2) complex to a putative damaged site, the DNA wraps around one UvrB monomer. DNA wrap is dependent on ATP binding by UvrB and probably causes local melting of the DNA helix, facilitating insertion of UvrB beta-hairpin between the DNA strands. Then UvrB probes one DNA strand for the presence of a lesion. If a lesion is found the UvrA subunits dissociate and the UvrB-DNA preincision complex is formed. This complex is subsequently bound by UvrC and the second UvrB is released. If no lesion is found, the DNA wraps around the other UvrB subunit that will check the other stand for damage.</text>
</comment>
<comment type="subunit">
    <text evidence="1">Forms a heterotetramer with UvrA during the search for lesions. Interacts with UvrC in an incision complex.</text>
</comment>
<comment type="subcellular location">
    <subcellularLocation>
        <location evidence="1">Cytoplasm</location>
    </subcellularLocation>
</comment>
<comment type="domain">
    <text evidence="1">The beta-hairpin motif is involved in DNA binding.</text>
</comment>
<comment type="similarity">
    <text evidence="1">Belongs to the UvrB family.</text>
</comment>
<evidence type="ECO:0000255" key="1">
    <source>
        <dbReference type="HAMAP-Rule" id="MF_00204"/>
    </source>
</evidence>
<keyword id="KW-0067">ATP-binding</keyword>
<keyword id="KW-0963">Cytoplasm</keyword>
<keyword id="KW-0227">DNA damage</keyword>
<keyword id="KW-0228">DNA excision</keyword>
<keyword id="KW-0234">DNA repair</keyword>
<keyword id="KW-0267">Excision nuclease</keyword>
<keyword id="KW-0547">Nucleotide-binding</keyword>
<keyword id="KW-1185">Reference proteome</keyword>
<keyword id="KW-0742">SOS response</keyword>
<dbReference type="EMBL" id="BA000019">
    <property type="protein sequence ID" value="BAB73089.1"/>
    <property type="molecule type" value="Genomic_DNA"/>
</dbReference>
<dbReference type="PIR" id="AI1947">
    <property type="entry name" value="AI1947"/>
</dbReference>
<dbReference type="RefSeq" id="WP_010995305.1">
    <property type="nucleotide sequence ID" value="NZ_RSCN01000008.1"/>
</dbReference>
<dbReference type="SMR" id="Q8YXS9"/>
<dbReference type="STRING" id="103690.gene:10493146"/>
<dbReference type="KEGG" id="ana:all1132"/>
<dbReference type="eggNOG" id="COG0556">
    <property type="taxonomic scope" value="Bacteria"/>
</dbReference>
<dbReference type="OrthoDB" id="9806651at2"/>
<dbReference type="Proteomes" id="UP000002483">
    <property type="component" value="Chromosome"/>
</dbReference>
<dbReference type="GO" id="GO:0005737">
    <property type="term" value="C:cytoplasm"/>
    <property type="evidence" value="ECO:0007669"/>
    <property type="project" value="UniProtKB-SubCell"/>
</dbReference>
<dbReference type="GO" id="GO:0009380">
    <property type="term" value="C:excinuclease repair complex"/>
    <property type="evidence" value="ECO:0007669"/>
    <property type="project" value="InterPro"/>
</dbReference>
<dbReference type="GO" id="GO:0005524">
    <property type="term" value="F:ATP binding"/>
    <property type="evidence" value="ECO:0007669"/>
    <property type="project" value="UniProtKB-UniRule"/>
</dbReference>
<dbReference type="GO" id="GO:0016887">
    <property type="term" value="F:ATP hydrolysis activity"/>
    <property type="evidence" value="ECO:0007669"/>
    <property type="project" value="InterPro"/>
</dbReference>
<dbReference type="GO" id="GO:0003677">
    <property type="term" value="F:DNA binding"/>
    <property type="evidence" value="ECO:0007669"/>
    <property type="project" value="UniProtKB-UniRule"/>
</dbReference>
<dbReference type="GO" id="GO:0009381">
    <property type="term" value="F:excinuclease ABC activity"/>
    <property type="evidence" value="ECO:0007669"/>
    <property type="project" value="UniProtKB-UniRule"/>
</dbReference>
<dbReference type="GO" id="GO:0006289">
    <property type="term" value="P:nucleotide-excision repair"/>
    <property type="evidence" value="ECO:0007669"/>
    <property type="project" value="UniProtKB-UniRule"/>
</dbReference>
<dbReference type="GO" id="GO:0009432">
    <property type="term" value="P:SOS response"/>
    <property type="evidence" value="ECO:0007669"/>
    <property type="project" value="UniProtKB-UniRule"/>
</dbReference>
<dbReference type="CDD" id="cd17916">
    <property type="entry name" value="DEXHc_UvrB"/>
    <property type="match status" value="1"/>
</dbReference>
<dbReference type="CDD" id="cd18790">
    <property type="entry name" value="SF2_C_UvrB"/>
    <property type="match status" value="1"/>
</dbReference>
<dbReference type="Gene3D" id="3.40.50.300">
    <property type="entry name" value="P-loop containing nucleotide triphosphate hydrolases"/>
    <property type="match status" value="3"/>
</dbReference>
<dbReference type="Gene3D" id="4.10.860.10">
    <property type="entry name" value="UVR domain"/>
    <property type="match status" value="1"/>
</dbReference>
<dbReference type="HAMAP" id="MF_00204">
    <property type="entry name" value="UvrB"/>
    <property type="match status" value="1"/>
</dbReference>
<dbReference type="InterPro" id="IPR006935">
    <property type="entry name" value="Helicase/UvrB_N"/>
</dbReference>
<dbReference type="InterPro" id="IPR014001">
    <property type="entry name" value="Helicase_ATP-bd"/>
</dbReference>
<dbReference type="InterPro" id="IPR001650">
    <property type="entry name" value="Helicase_C-like"/>
</dbReference>
<dbReference type="InterPro" id="IPR027417">
    <property type="entry name" value="P-loop_NTPase"/>
</dbReference>
<dbReference type="InterPro" id="IPR001943">
    <property type="entry name" value="UVR_dom"/>
</dbReference>
<dbReference type="InterPro" id="IPR036876">
    <property type="entry name" value="UVR_dom_sf"/>
</dbReference>
<dbReference type="InterPro" id="IPR004807">
    <property type="entry name" value="UvrB"/>
</dbReference>
<dbReference type="InterPro" id="IPR041471">
    <property type="entry name" value="UvrB_inter"/>
</dbReference>
<dbReference type="InterPro" id="IPR024759">
    <property type="entry name" value="UvrB_YAD/RRR_dom"/>
</dbReference>
<dbReference type="NCBIfam" id="NF003673">
    <property type="entry name" value="PRK05298.1"/>
    <property type="match status" value="1"/>
</dbReference>
<dbReference type="NCBIfam" id="TIGR00631">
    <property type="entry name" value="uvrb"/>
    <property type="match status" value="1"/>
</dbReference>
<dbReference type="PANTHER" id="PTHR24029">
    <property type="entry name" value="UVRABC SYSTEM PROTEIN B"/>
    <property type="match status" value="1"/>
</dbReference>
<dbReference type="PANTHER" id="PTHR24029:SF0">
    <property type="entry name" value="UVRABC SYSTEM PROTEIN B"/>
    <property type="match status" value="1"/>
</dbReference>
<dbReference type="Pfam" id="PF00271">
    <property type="entry name" value="Helicase_C"/>
    <property type="match status" value="1"/>
</dbReference>
<dbReference type="Pfam" id="PF04851">
    <property type="entry name" value="ResIII"/>
    <property type="match status" value="1"/>
</dbReference>
<dbReference type="Pfam" id="PF02151">
    <property type="entry name" value="UVR"/>
    <property type="match status" value="1"/>
</dbReference>
<dbReference type="Pfam" id="PF12344">
    <property type="entry name" value="UvrB"/>
    <property type="match status" value="1"/>
</dbReference>
<dbReference type="Pfam" id="PF17757">
    <property type="entry name" value="UvrB_inter"/>
    <property type="match status" value="1"/>
</dbReference>
<dbReference type="SMART" id="SM00487">
    <property type="entry name" value="DEXDc"/>
    <property type="match status" value="1"/>
</dbReference>
<dbReference type="SMART" id="SM00490">
    <property type="entry name" value="HELICc"/>
    <property type="match status" value="1"/>
</dbReference>
<dbReference type="SUPFAM" id="SSF46600">
    <property type="entry name" value="C-terminal UvrC-binding domain of UvrB"/>
    <property type="match status" value="1"/>
</dbReference>
<dbReference type="SUPFAM" id="SSF52540">
    <property type="entry name" value="P-loop containing nucleoside triphosphate hydrolases"/>
    <property type="match status" value="2"/>
</dbReference>
<dbReference type="PROSITE" id="PS51192">
    <property type="entry name" value="HELICASE_ATP_BIND_1"/>
    <property type="match status" value="1"/>
</dbReference>
<dbReference type="PROSITE" id="PS51194">
    <property type="entry name" value="HELICASE_CTER"/>
    <property type="match status" value="1"/>
</dbReference>
<dbReference type="PROSITE" id="PS50151">
    <property type="entry name" value="UVR"/>
    <property type="match status" value="1"/>
</dbReference>
<reference key="1">
    <citation type="journal article" date="2001" name="DNA Res.">
        <title>Complete genomic sequence of the filamentous nitrogen-fixing cyanobacterium Anabaena sp. strain PCC 7120.</title>
        <authorList>
            <person name="Kaneko T."/>
            <person name="Nakamura Y."/>
            <person name="Wolk C.P."/>
            <person name="Kuritz T."/>
            <person name="Sasamoto S."/>
            <person name="Watanabe A."/>
            <person name="Iriguchi M."/>
            <person name="Ishikawa A."/>
            <person name="Kawashima K."/>
            <person name="Kimura T."/>
            <person name="Kishida Y."/>
            <person name="Kohara M."/>
            <person name="Matsumoto M."/>
            <person name="Matsuno A."/>
            <person name="Muraki A."/>
            <person name="Nakazaki N."/>
            <person name="Shimpo S."/>
            <person name="Sugimoto M."/>
            <person name="Takazawa M."/>
            <person name="Yamada M."/>
            <person name="Yasuda M."/>
            <person name="Tabata S."/>
        </authorList>
    </citation>
    <scope>NUCLEOTIDE SEQUENCE [LARGE SCALE GENOMIC DNA]</scope>
    <source>
        <strain>PCC 7120 / SAG 25.82 / UTEX 2576</strain>
    </source>
</reference>
<organism>
    <name type="scientific">Nostoc sp. (strain PCC 7120 / SAG 25.82 / UTEX 2576)</name>
    <dbReference type="NCBI Taxonomy" id="103690"/>
    <lineage>
        <taxon>Bacteria</taxon>
        <taxon>Bacillati</taxon>
        <taxon>Cyanobacteriota</taxon>
        <taxon>Cyanophyceae</taxon>
        <taxon>Nostocales</taxon>
        <taxon>Nostocaceae</taxon>
        <taxon>Nostoc</taxon>
    </lineage>
</organism>
<feature type="chain" id="PRO_0000138377" description="UvrABC system protein B">
    <location>
        <begin position="1"/>
        <end position="665"/>
    </location>
</feature>
<feature type="domain" description="Helicase ATP-binding" evidence="1">
    <location>
        <begin position="25"/>
        <end position="412"/>
    </location>
</feature>
<feature type="domain" description="Helicase C-terminal" evidence="1">
    <location>
        <begin position="429"/>
        <end position="583"/>
    </location>
</feature>
<feature type="domain" description="UVR" evidence="1">
    <location>
        <begin position="626"/>
        <end position="661"/>
    </location>
</feature>
<feature type="short sequence motif" description="Beta-hairpin">
    <location>
        <begin position="91"/>
        <end position="114"/>
    </location>
</feature>
<feature type="binding site" evidence="1">
    <location>
        <begin position="38"/>
        <end position="45"/>
    </location>
    <ligand>
        <name>ATP</name>
        <dbReference type="ChEBI" id="CHEBI:30616"/>
    </ligand>
</feature>
<protein>
    <recommendedName>
        <fullName evidence="1">UvrABC system protein B</fullName>
        <shortName evidence="1">Protein UvrB</shortName>
    </recommendedName>
    <alternativeName>
        <fullName evidence="1">Excinuclease ABC subunit B</fullName>
    </alternativeName>
</protein>
<sequence length="665" mass="75587">MTEFGLQAPFSPTGDQPSAIAQLVASIEGGNRYQTLLGATGTGKTFSIAAVIEKIGRPTLVLAHNKTLAAQLCNELREFFPNNAVEYFVSYYDYYQPEAYIPVTDTYIEKTAAINDEIDMLRHSATRSLFERRDVIVVASISCIYGLGIPAEYLKAAIPLQIGMEVNQREILRDLASVQYSRNDVEMGRGRFRVRGDVLEIGPAYEDRIIRVEFFGDEIDAIRYIDPVTGEIINSLQAVNIYPARHFVTPEERLEVACEDIAYELKQRKAELEETGKLVEAQRIDQRTRYDLEMLREVGYCNGVENYSRHLAGRQAGEPPESLIDYFPKDWLLVIDESHVTVPQIRGMYNGDQARKKVLIEHGFRLPSAADNRPLKAEEFWQKVNQCIFVSATPGNWELEISENRIVEQVIRPTGVIDPEISVRPTEGQIDDLLGEIKDRIDLHERVLITTLTKRMAEDLTEYLQEHGVKVRYLHSEINSIQRIEILQDLRQGSFDVLVGVNLLREGLDLPEVSLVAIMDADKEGFLRAERSLIQTIGRAARHIRGQAILYADNMTDSMIKAIEETDRRRGIQVAYNKLHGITPQPIVKKSSNAILSFLEVSRRLNATDLKVVEEHIDELPLEEIPNLIDKLEAQMKEASKKLEFEEAAKLRDRIKQLRDKLVGR</sequence>
<proteinExistence type="inferred from homology"/>